<name>HOA3_COMTE</name>
<protein>
    <recommendedName>
        <fullName evidence="1">4-hydroxy-2-oxovalerate aldolase 3</fullName>
        <shortName evidence="1">HOA 3</shortName>
        <ecNumber evidence="1">4.1.3.39</ecNumber>
    </recommendedName>
    <alternativeName>
        <fullName evidence="1">4-hydroxy-2-keto-pentanoic acid aldolase 3</fullName>
    </alternativeName>
    <alternativeName>
        <fullName evidence="1">4-hydroxy-2-oxopentanoate aldolase 3</fullName>
    </alternativeName>
</protein>
<keyword id="KW-0058">Aromatic hydrocarbons catabolism</keyword>
<keyword id="KW-0456">Lyase</keyword>
<keyword id="KW-0464">Manganese</keyword>
<keyword id="KW-0479">Metal-binding</keyword>
<gene>
    <name type="primary">aphG</name>
</gene>
<organism>
    <name type="scientific">Comamonas testosteroni</name>
    <name type="common">Pseudomonas testosteroni</name>
    <dbReference type="NCBI Taxonomy" id="285"/>
    <lineage>
        <taxon>Bacteria</taxon>
        <taxon>Pseudomonadati</taxon>
        <taxon>Pseudomonadota</taxon>
        <taxon>Betaproteobacteria</taxon>
        <taxon>Burkholderiales</taxon>
        <taxon>Comamonadaceae</taxon>
        <taxon>Comamonas</taxon>
    </lineage>
</organism>
<accession>Q9RHN1</accession>
<proteinExistence type="inferred from homology"/>
<sequence length="345" mass="36750">MELKGKKITVHDMTLRDGMHPKRHLMTLEQMKSVAQGLDAAGVPLIEVTHGDGLGGASVNYGFPAHSDEEYLSTVIPLMKQAKVSALLLPGIGTVDHLQMAHELGVTTIRVATHCTEADVSEQHITAARKLGMDTVGFLMMAHMNSAEGLVKQAKLMEGYGANCVYVTDSAGYLLPDQVKERIAAVRAALKPETELGFHGHHNLAMGVANSIAAVEAGANRIDAAAAGLGAGAGNTPMEVLVAVCERMGIETGVDVWKIQDVAEDLVVPLMDFPIRVDRDALTLGYAGVYGSFLLFAKRAEKKYGIPARDLLVELGRRGMVGGQEDMIEDTALTMARARGIKVAA</sequence>
<reference key="1">
    <citation type="journal article" date="2000" name="Microbiology">
        <title>Arrangement and regulation of the genes for meta-pathway enzymes required for degradation of phenol in Comamonas testosteroni TA441.</title>
        <authorList>
            <person name="Arai H."/>
            <person name="Ohishi T."/>
            <person name="Chang M.Y."/>
            <person name="Kudo T."/>
        </authorList>
    </citation>
    <scope>NUCLEOTIDE SEQUENCE [GENOMIC DNA]</scope>
    <source>
        <strain>TA441</strain>
    </source>
</reference>
<evidence type="ECO:0000255" key="1">
    <source>
        <dbReference type="HAMAP-Rule" id="MF_01656"/>
    </source>
</evidence>
<feature type="chain" id="PRO_0000387816" description="4-hydroxy-2-oxovalerate aldolase 3">
    <location>
        <begin position="1"/>
        <end position="345"/>
    </location>
</feature>
<feature type="domain" description="Pyruvate carboxyltransferase" evidence="1">
    <location>
        <begin position="8"/>
        <end position="260"/>
    </location>
</feature>
<feature type="active site" description="Proton acceptor" evidence="1">
    <location>
        <position position="20"/>
    </location>
</feature>
<feature type="binding site" evidence="1">
    <location>
        <begin position="16"/>
        <end position="17"/>
    </location>
    <ligand>
        <name>substrate</name>
    </ligand>
</feature>
<feature type="binding site" evidence="1">
    <location>
        <position position="17"/>
    </location>
    <ligand>
        <name>Mn(2+)</name>
        <dbReference type="ChEBI" id="CHEBI:29035"/>
    </ligand>
</feature>
<feature type="binding site" evidence="1">
    <location>
        <position position="170"/>
    </location>
    <ligand>
        <name>substrate</name>
    </ligand>
</feature>
<feature type="binding site" evidence="1">
    <location>
        <position position="199"/>
    </location>
    <ligand>
        <name>Mn(2+)</name>
        <dbReference type="ChEBI" id="CHEBI:29035"/>
    </ligand>
</feature>
<feature type="binding site" evidence="1">
    <location>
        <position position="199"/>
    </location>
    <ligand>
        <name>substrate</name>
    </ligand>
</feature>
<feature type="binding site" evidence="1">
    <location>
        <position position="201"/>
    </location>
    <ligand>
        <name>Mn(2+)</name>
        <dbReference type="ChEBI" id="CHEBI:29035"/>
    </ligand>
</feature>
<feature type="binding site" evidence="1">
    <location>
        <position position="290"/>
    </location>
    <ligand>
        <name>substrate</name>
    </ligand>
</feature>
<feature type="site" description="Transition state stabilizer" evidence="1">
    <location>
        <position position="16"/>
    </location>
</feature>
<comment type="catalytic activity">
    <reaction evidence="1">
        <text>(S)-4-hydroxy-2-oxopentanoate = acetaldehyde + pyruvate</text>
        <dbReference type="Rhea" id="RHEA:22624"/>
        <dbReference type="ChEBI" id="CHEBI:15343"/>
        <dbReference type="ChEBI" id="CHEBI:15361"/>
        <dbReference type="ChEBI" id="CHEBI:73143"/>
        <dbReference type="EC" id="4.1.3.39"/>
    </reaction>
</comment>
<comment type="similarity">
    <text evidence="1">Belongs to the 4-hydroxy-2-oxovalerate aldolase family.</text>
</comment>
<dbReference type="EC" id="4.1.3.39" evidence="1"/>
<dbReference type="EMBL" id="AB029044">
    <property type="protein sequence ID" value="BAA88504.1"/>
    <property type="molecule type" value="Genomic_DNA"/>
</dbReference>
<dbReference type="RefSeq" id="WP_149356732.1">
    <property type="nucleotide sequence ID" value="NZ_BKBW01000011.1"/>
</dbReference>
<dbReference type="SMR" id="Q9RHN1"/>
<dbReference type="GO" id="GO:0003852">
    <property type="term" value="F:2-isopropylmalate synthase activity"/>
    <property type="evidence" value="ECO:0007669"/>
    <property type="project" value="TreeGrafter"/>
</dbReference>
<dbReference type="GO" id="GO:0008701">
    <property type="term" value="F:4-hydroxy-2-oxovalerate aldolase activity"/>
    <property type="evidence" value="ECO:0007669"/>
    <property type="project" value="UniProtKB-UniRule"/>
</dbReference>
<dbReference type="GO" id="GO:0030145">
    <property type="term" value="F:manganese ion binding"/>
    <property type="evidence" value="ECO:0007669"/>
    <property type="project" value="UniProtKB-UniRule"/>
</dbReference>
<dbReference type="GO" id="GO:0009056">
    <property type="term" value="P:catabolic process"/>
    <property type="evidence" value="ECO:0007669"/>
    <property type="project" value="UniProtKB-KW"/>
</dbReference>
<dbReference type="GO" id="GO:0009098">
    <property type="term" value="P:L-leucine biosynthetic process"/>
    <property type="evidence" value="ECO:0007669"/>
    <property type="project" value="TreeGrafter"/>
</dbReference>
<dbReference type="CDD" id="cd07943">
    <property type="entry name" value="DRE_TIM_HOA"/>
    <property type="match status" value="1"/>
</dbReference>
<dbReference type="Gene3D" id="1.10.8.60">
    <property type="match status" value="1"/>
</dbReference>
<dbReference type="Gene3D" id="3.20.20.70">
    <property type="entry name" value="Aldolase class I"/>
    <property type="match status" value="1"/>
</dbReference>
<dbReference type="HAMAP" id="MF_01656">
    <property type="entry name" value="HOA"/>
    <property type="match status" value="1"/>
</dbReference>
<dbReference type="InterPro" id="IPR050073">
    <property type="entry name" value="2-IPM_HCS-like"/>
</dbReference>
<dbReference type="InterPro" id="IPR017629">
    <property type="entry name" value="4OH_2_O-val_aldolase"/>
</dbReference>
<dbReference type="InterPro" id="IPR013785">
    <property type="entry name" value="Aldolase_TIM"/>
</dbReference>
<dbReference type="InterPro" id="IPR012425">
    <property type="entry name" value="DmpG_comm"/>
</dbReference>
<dbReference type="InterPro" id="IPR035685">
    <property type="entry name" value="DRE_TIM_HOA"/>
</dbReference>
<dbReference type="InterPro" id="IPR000891">
    <property type="entry name" value="PYR_CT"/>
</dbReference>
<dbReference type="NCBIfam" id="TIGR03217">
    <property type="entry name" value="4OH_2_O_val_ald"/>
    <property type="match status" value="1"/>
</dbReference>
<dbReference type="NCBIfam" id="NF006049">
    <property type="entry name" value="PRK08195.1"/>
    <property type="match status" value="1"/>
</dbReference>
<dbReference type="PANTHER" id="PTHR10277:SF9">
    <property type="entry name" value="2-ISOPROPYLMALATE SYNTHASE 1, CHLOROPLASTIC-RELATED"/>
    <property type="match status" value="1"/>
</dbReference>
<dbReference type="PANTHER" id="PTHR10277">
    <property type="entry name" value="HOMOCITRATE SYNTHASE-RELATED"/>
    <property type="match status" value="1"/>
</dbReference>
<dbReference type="Pfam" id="PF07836">
    <property type="entry name" value="DmpG_comm"/>
    <property type="match status" value="1"/>
</dbReference>
<dbReference type="Pfam" id="PF00682">
    <property type="entry name" value="HMGL-like"/>
    <property type="match status" value="1"/>
</dbReference>
<dbReference type="SUPFAM" id="SSF51569">
    <property type="entry name" value="Aldolase"/>
    <property type="match status" value="1"/>
</dbReference>
<dbReference type="SUPFAM" id="SSF89000">
    <property type="entry name" value="post-HMGL domain-like"/>
    <property type="match status" value="1"/>
</dbReference>
<dbReference type="PROSITE" id="PS50991">
    <property type="entry name" value="PYR_CT"/>
    <property type="match status" value="1"/>
</dbReference>